<feature type="signal peptide" evidence="1">
    <location>
        <begin position="1"/>
        <end position="21"/>
    </location>
</feature>
<feature type="chain" id="PRO_0000013656" description="Uncharacterized protein AF_1226">
    <location>
        <begin position="22"/>
        <end position="168"/>
    </location>
</feature>
<gene>
    <name type="ordered locus">AF_1226</name>
</gene>
<proteinExistence type="inferred from homology"/>
<sequence length="168" mass="18521">MVYEVLAVVSGGLLGFGVTWAYLNYALKEEKAKEEEVMRAKISNVTSSVEPKLETKMEKPPSDLSEFVDYLCNKYMLSDVTLLTPDGLPIASNSPTPEEDAAIAPELIKVGKGMLNSSRILLSGENTRVLVMQVNPDVLLHARVARDISKREIERIGEEVNMVLEGII</sequence>
<dbReference type="EMBL" id="AE000782">
    <property type="protein sequence ID" value="AAB90024.1"/>
    <property type="molecule type" value="Genomic_DNA"/>
</dbReference>
<dbReference type="PIR" id="A69403">
    <property type="entry name" value="A69403"/>
</dbReference>
<dbReference type="RefSeq" id="WP_010878721.1">
    <property type="nucleotide sequence ID" value="NC_000917.1"/>
</dbReference>
<dbReference type="SMR" id="O29042"/>
<dbReference type="STRING" id="224325.AF_1226"/>
<dbReference type="PaxDb" id="224325-AF_1226"/>
<dbReference type="EnsemblBacteria" id="AAB90024">
    <property type="protein sequence ID" value="AAB90024"/>
    <property type="gene ID" value="AF_1226"/>
</dbReference>
<dbReference type="KEGG" id="afu:AF_1226"/>
<dbReference type="eggNOG" id="arCOG03412">
    <property type="taxonomic scope" value="Archaea"/>
</dbReference>
<dbReference type="HOGENOM" id="CLU_1582824_0_0_2"/>
<dbReference type="Proteomes" id="UP000002199">
    <property type="component" value="Chromosome"/>
</dbReference>
<protein>
    <recommendedName>
        <fullName>Uncharacterized protein AF_1226</fullName>
    </recommendedName>
</protein>
<organism>
    <name type="scientific">Archaeoglobus fulgidus (strain ATCC 49558 / DSM 4304 / JCM 9628 / NBRC 100126 / VC-16)</name>
    <dbReference type="NCBI Taxonomy" id="224325"/>
    <lineage>
        <taxon>Archaea</taxon>
        <taxon>Methanobacteriati</taxon>
        <taxon>Methanobacteriota</taxon>
        <taxon>Archaeoglobi</taxon>
        <taxon>Archaeoglobales</taxon>
        <taxon>Archaeoglobaceae</taxon>
        <taxon>Archaeoglobus</taxon>
    </lineage>
</organism>
<keyword id="KW-1185">Reference proteome</keyword>
<keyword id="KW-0732">Signal</keyword>
<accession>O29042</accession>
<evidence type="ECO:0000255" key="1"/>
<name>Y1226_ARCFU</name>
<reference key="1">
    <citation type="journal article" date="1997" name="Nature">
        <title>The complete genome sequence of the hyperthermophilic, sulphate-reducing archaeon Archaeoglobus fulgidus.</title>
        <authorList>
            <person name="Klenk H.-P."/>
            <person name="Clayton R.A."/>
            <person name="Tomb J.-F."/>
            <person name="White O."/>
            <person name="Nelson K.E."/>
            <person name="Ketchum K.A."/>
            <person name="Dodson R.J."/>
            <person name="Gwinn M.L."/>
            <person name="Hickey E.K."/>
            <person name="Peterson J.D."/>
            <person name="Richardson D.L."/>
            <person name="Kerlavage A.R."/>
            <person name="Graham D.E."/>
            <person name="Kyrpides N.C."/>
            <person name="Fleischmann R.D."/>
            <person name="Quackenbush J."/>
            <person name="Lee N.H."/>
            <person name="Sutton G.G."/>
            <person name="Gill S.R."/>
            <person name="Kirkness E.F."/>
            <person name="Dougherty B.A."/>
            <person name="McKenney K."/>
            <person name="Adams M.D."/>
            <person name="Loftus B.J."/>
            <person name="Peterson S.N."/>
            <person name="Reich C.I."/>
            <person name="McNeil L.K."/>
            <person name="Badger J.H."/>
            <person name="Glodek A."/>
            <person name="Zhou L."/>
            <person name="Overbeek R."/>
            <person name="Gocayne J.D."/>
            <person name="Weidman J.F."/>
            <person name="McDonald L.A."/>
            <person name="Utterback T.R."/>
            <person name="Cotton M.D."/>
            <person name="Spriggs T."/>
            <person name="Artiach P."/>
            <person name="Kaine B.P."/>
            <person name="Sykes S.M."/>
            <person name="Sadow P.W."/>
            <person name="D'Andrea K.P."/>
            <person name="Bowman C."/>
            <person name="Fujii C."/>
            <person name="Garland S.A."/>
            <person name="Mason T.M."/>
            <person name="Olsen G.J."/>
            <person name="Fraser C.M."/>
            <person name="Smith H.O."/>
            <person name="Woese C.R."/>
            <person name="Venter J.C."/>
        </authorList>
    </citation>
    <scope>NUCLEOTIDE SEQUENCE [LARGE SCALE GENOMIC DNA]</scope>
    <source>
        <strain>ATCC 49558 / DSM 4304 / JCM 9628 / NBRC 100126 / VC-16</strain>
    </source>
</reference>